<evidence type="ECO:0000250" key="1"/>
<evidence type="ECO:0000305" key="2"/>
<keyword id="KW-0963">Cytoplasm</keyword>
<keyword id="KW-0233">DNA recombination</keyword>
<keyword id="KW-1185">Reference proteome</keyword>
<sequence length="302" mass="34641">MVWFKNLMIYRLTKALDWTADSLQTALQQCEYHPCQQSDMSKFGWTNPLRGTEMLHFSVGKQILLLAHKEEKILPAHVVKAELEQRIELLEQKENRKLKKVEKQALKDDVVSMLLPRAFSKNQQTALWIDTENQLIYVDAASSKRAEDALALLRKSLGSLPVVPLSFANEPSVIMTDWINKDQTPAWLMPLEEAELTGSQDSGIIRCKQQNLESDEIQTLLNAGKFITKLSLAWEERLSFILNEDCTLKRLKFADQLREKNDDILKEDYAQRFDADFVLMTGVLTQLTANLLEEFGGEKARL</sequence>
<name>RDGC_PASMU</name>
<proteinExistence type="inferred from homology"/>
<reference key="1">
    <citation type="journal article" date="2001" name="Proc. Natl. Acad. Sci. U.S.A.">
        <title>Complete genomic sequence of Pasteurella multocida Pm70.</title>
        <authorList>
            <person name="May B.J."/>
            <person name="Zhang Q."/>
            <person name="Li L.L."/>
            <person name="Paustian M.L."/>
            <person name="Whittam T.S."/>
            <person name="Kapur V."/>
        </authorList>
    </citation>
    <scope>NUCLEOTIDE SEQUENCE [LARGE SCALE GENOMIC DNA]</scope>
    <source>
        <strain>Pm70</strain>
    </source>
</reference>
<comment type="function">
    <text evidence="1">May be involved in recombination.</text>
</comment>
<comment type="subcellular location">
    <subcellularLocation>
        <location evidence="1">Cytoplasm</location>
        <location evidence="1">Nucleoid</location>
    </subcellularLocation>
</comment>
<comment type="similarity">
    <text evidence="2">Belongs to the RdgC family.</text>
</comment>
<dbReference type="EMBL" id="AE004439">
    <property type="protein sequence ID" value="AAK02180.1"/>
    <property type="molecule type" value="Genomic_DNA"/>
</dbReference>
<dbReference type="RefSeq" id="WP_005722581.1">
    <property type="nucleotide sequence ID" value="NC_002663.1"/>
</dbReference>
<dbReference type="SMR" id="P57810"/>
<dbReference type="STRING" id="272843.PM0096"/>
<dbReference type="EnsemblBacteria" id="AAK02180">
    <property type="protein sequence ID" value="AAK02180"/>
    <property type="gene ID" value="PM0096"/>
</dbReference>
<dbReference type="KEGG" id="pmu:PM0096"/>
<dbReference type="PATRIC" id="fig|272843.6.peg.99"/>
<dbReference type="HOGENOM" id="CLU_052038_1_1_6"/>
<dbReference type="OrthoDB" id="5290530at2"/>
<dbReference type="Proteomes" id="UP000000809">
    <property type="component" value="Chromosome"/>
</dbReference>
<dbReference type="GO" id="GO:0043590">
    <property type="term" value="C:bacterial nucleoid"/>
    <property type="evidence" value="ECO:0007669"/>
    <property type="project" value="TreeGrafter"/>
</dbReference>
<dbReference type="GO" id="GO:0005737">
    <property type="term" value="C:cytoplasm"/>
    <property type="evidence" value="ECO:0007669"/>
    <property type="project" value="UniProtKB-UniRule"/>
</dbReference>
<dbReference type="GO" id="GO:0003690">
    <property type="term" value="F:double-stranded DNA binding"/>
    <property type="evidence" value="ECO:0007669"/>
    <property type="project" value="TreeGrafter"/>
</dbReference>
<dbReference type="GO" id="GO:0006310">
    <property type="term" value="P:DNA recombination"/>
    <property type="evidence" value="ECO:0007669"/>
    <property type="project" value="UniProtKB-UniRule"/>
</dbReference>
<dbReference type="GO" id="GO:0000018">
    <property type="term" value="P:regulation of DNA recombination"/>
    <property type="evidence" value="ECO:0007669"/>
    <property type="project" value="TreeGrafter"/>
</dbReference>
<dbReference type="HAMAP" id="MF_00194">
    <property type="entry name" value="RdgC"/>
    <property type="match status" value="1"/>
</dbReference>
<dbReference type="InterPro" id="IPR007476">
    <property type="entry name" value="RdgC"/>
</dbReference>
<dbReference type="NCBIfam" id="NF001462">
    <property type="entry name" value="PRK00321.1-3"/>
    <property type="match status" value="1"/>
</dbReference>
<dbReference type="NCBIfam" id="NF001464">
    <property type="entry name" value="PRK00321.1-5"/>
    <property type="match status" value="1"/>
</dbReference>
<dbReference type="PANTHER" id="PTHR38103">
    <property type="entry name" value="RECOMBINATION-ASSOCIATED PROTEIN RDGC"/>
    <property type="match status" value="1"/>
</dbReference>
<dbReference type="PANTHER" id="PTHR38103:SF1">
    <property type="entry name" value="RECOMBINATION-ASSOCIATED PROTEIN RDGC"/>
    <property type="match status" value="1"/>
</dbReference>
<dbReference type="Pfam" id="PF04381">
    <property type="entry name" value="RdgC"/>
    <property type="match status" value="1"/>
</dbReference>
<accession>P57810</accession>
<protein>
    <recommendedName>
        <fullName>Recombination-associated protein RdgC</fullName>
    </recommendedName>
</protein>
<organism>
    <name type="scientific">Pasteurella multocida (strain Pm70)</name>
    <dbReference type="NCBI Taxonomy" id="272843"/>
    <lineage>
        <taxon>Bacteria</taxon>
        <taxon>Pseudomonadati</taxon>
        <taxon>Pseudomonadota</taxon>
        <taxon>Gammaproteobacteria</taxon>
        <taxon>Pasteurellales</taxon>
        <taxon>Pasteurellaceae</taxon>
        <taxon>Pasteurella</taxon>
    </lineage>
</organism>
<feature type="chain" id="PRO_0000211744" description="Recombination-associated protein RdgC">
    <location>
        <begin position="1"/>
        <end position="302"/>
    </location>
</feature>
<gene>
    <name type="primary">rdgC</name>
    <name type="ordered locus">PM0096</name>
</gene>